<feature type="chain" id="PRO_0000185362" description="Putative glucose-6-phosphate isomerase 2">
    <location>
        <begin position="1"/>
        <end position="200"/>
    </location>
</feature>
<feature type="binding site" evidence="1">
    <location>
        <position position="92"/>
    </location>
    <ligand>
        <name>Fe cation</name>
        <dbReference type="ChEBI" id="CHEBI:24875"/>
    </ligand>
</feature>
<feature type="binding site" evidence="1">
    <location>
        <position position="94"/>
    </location>
    <ligand>
        <name>Fe cation</name>
        <dbReference type="ChEBI" id="CHEBI:24875"/>
    </ligand>
</feature>
<feature type="binding site" evidence="1">
    <location>
        <position position="101"/>
    </location>
    <ligand>
        <name>Fe cation</name>
        <dbReference type="ChEBI" id="CHEBI:24875"/>
    </ligand>
</feature>
<feature type="binding site" evidence="1">
    <location>
        <position position="140"/>
    </location>
    <ligand>
        <name>Fe cation</name>
        <dbReference type="ChEBI" id="CHEBI:24875"/>
    </ligand>
</feature>
<geneLocation type="plasmid">
    <name>pSymB</name>
    <name>megaplasmid 2</name>
</geneLocation>
<comment type="catalytic activity">
    <reaction>
        <text>alpha-D-glucose 6-phosphate = beta-D-fructose 6-phosphate</text>
        <dbReference type="Rhea" id="RHEA:11816"/>
        <dbReference type="ChEBI" id="CHEBI:57634"/>
        <dbReference type="ChEBI" id="CHEBI:58225"/>
        <dbReference type="EC" id="5.3.1.9"/>
    </reaction>
</comment>
<comment type="cofactor">
    <cofactor evidence="1">
        <name>Fe cation</name>
        <dbReference type="ChEBI" id="CHEBI:24875"/>
    </cofactor>
    <text evidence="1">Binds 1 Fe cation per subunit.</text>
</comment>
<comment type="pathway">
    <text>Carbohydrate degradation; glycolysis; D-glyceraldehyde 3-phosphate and glycerone phosphate from D-glucose: step 2/4.</text>
</comment>
<comment type="subunit">
    <text evidence="1">Homodimer.</text>
</comment>
<comment type="subcellular location">
    <subcellularLocation>
        <location evidence="1">Cytoplasm</location>
    </subcellularLocation>
</comment>
<comment type="miscellaneous">
    <text>R.meliloti has a classic glucose-6-phosphate isomerase (AC Q92SC4) and two archaeal-type glucose-6-phosphate isomerases.</text>
</comment>
<comment type="similarity">
    <text evidence="2">Belongs to the archaeal-type GPI family.</text>
</comment>
<reference key="1">
    <citation type="journal article" date="2001" name="Proc. Natl. Acad. Sci. U.S.A.">
        <title>The complete sequence of the 1,683-kb pSymB megaplasmid from the N2-fixing endosymbiont Sinorhizobium meliloti.</title>
        <authorList>
            <person name="Finan T.M."/>
            <person name="Weidner S."/>
            <person name="Wong K."/>
            <person name="Buhrmester J."/>
            <person name="Chain P."/>
            <person name="Vorhoelter F.J."/>
            <person name="Hernandez-Lucas I."/>
            <person name="Becker A."/>
            <person name="Cowie A."/>
            <person name="Gouzy J."/>
            <person name="Golding B."/>
            <person name="Puehler A."/>
        </authorList>
    </citation>
    <scope>NUCLEOTIDE SEQUENCE [LARGE SCALE GENOMIC DNA]</scope>
    <source>
        <strain>1021</strain>
    </source>
</reference>
<reference key="2">
    <citation type="journal article" date="2001" name="Science">
        <title>The composite genome of the legume symbiont Sinorhizobium meliloti.</title>
        <authorList>
            <person name="Galibert F."/>
            <person name="Finan T.M."/>
            <person name="Long S.R."/>
            <person name="Puehler A."/>
            <person name="Abola P."/>
            <person name="Ampe F."/>
            <person name="Barloy-Hubler F."/>
            <person name="Barnett M.J."/>
            <person name="Becker A."/>
            <person name="Boistard P."/>
            <person name="Bothe G."/>
            <person name="Boutry M."/>
            <person name="Bowser L."/>
            <person name="Buhrmester J."/>
            <person name="Cadieu E."/>
            <person name="Capela D."/>
            <person name="Chain P."/>
            <person name="Cowie A."/>
            <person name="Davis R.W."/>
            <person name="Dreano S."/>
            <person name="Federspiel N.A."/>
            <person name="Fisher R.F."/>
            <person name="Gloux S."/>
            <person name="Godrie T."/>
            <person name="Goffeau A."/>
            <person name="Golding B."/>
            <person name="Gouzy J."/>
            <person name="Gurjal M."/>
            <person name="Hernandez-Lucas I."/>
            <person name="Hong A."/>
            <person name="Huizar L."/>
            <person name="Hyman R.W."/>
            <person name="Jones T."/>
            <person name="Kahn D."/>
            <person name="Kahn M.L."/>
            <person name="Kalman S."/>
            <person name="Keating D.H."/>
            <person name="Kiss E."/>
            <person name="Komp C."/>
            <person name="Lelaure V."/>
            <person name="Masuy D."/>
            <person name="Palm C."/>
            <person name="Peck M.C."/>
            <person name="Pohl T.M."/>
            <person name="Portetelle D."/>
            <person name="Purnelle B."/>
            <person name="Ramsperger U."/>
            <person name="Surzycki R."/>
            <person name="Thebault P."/>
            <person name="Vandenbol M."/>
            <person name="Vorhoelter F.J."/>
            <person name="Weidner S."/>
            <person name="Wells D.H."/>
            <person name="Wong K."/>
            <person name="Yeh K.-C."/>
            <person name="Batut J."/>
        </authorList>
    </citation>
    <scope>NUCLEOTIDE SEQUENCE [LARGE SCALE GENOMIC DNA]</scope>
    <source>
        <strain>1021</strain>
    </source>
</reference>
<evidence type="ECO:0000250" key="1"/>
<evidence type="ECO:0000305" key="2"/>
<gene>
    <name type="primary">pgiA2</name>
    <name type="ordered locus">RB1150</name>
    <name type="ORF">SMb20857</name>
</gene>
<accession>Q92UI1</accession>
<keyword id="KW-0963">Cytoplasm</keyword>
<keyword id="KW-0312">Gluconeogenesis</keyword>
<keyword id="KW-0324">Glycolysis</keyword>
<keyword id="KW-0408">Iron</keyword>
<keyword id="KW-0413">Isomerase</keyword>
<keyword id="KW-0479">Metal-binding</keyword>
<keyword id="KW-0614">Plasmid</keyword>
<keyword id="KW-1185">Reference proteome</keyword>
<proteinExistence type="inferred from homology"/>
<protein>
    <recommendedName>
        <fullName>Putative glucose-6-phosphate isomerase 2</fullName>
        <shortName>GPI 2</shortName>
        <ecNumber>5.3.1.9</ecNumber>
    </recommendedName>
    <alternativeName>
        <fullName>Phosphoglucose isomerase 2</fullName>
        <shortName>PGI 2</shortName>
    </alternativeName>
    <alternativeName>
        <fullName>Phosphohexose isomerase 2</fullName>
        <shortName>PHI 2</shortName>
    </alternativeName>
</protein>
<name>G6PI2_RHIME</name>
<organism>
    <name type="scientific">Rhizobium meliloti (strain 1021)</name>
    <name type="common">Ensifer meliloti</name>
    <name type="synonym">Sinorhizobium meliloti</name>
    <dbReference type="NCBI Taxonomy" id="266834"/>
    <lineage>
        <taxon>Bacteria</taxon>
        <taxon>Pseudomonadati</taxon>
        <taxon>Pseudomonadota</taxon>
        <taxon>Alphaproteobacteria</taxon>
        <taxon>Hyphomicrobiales</taxon>
        <taxon>Rhizobiaceae</taxon>
        <taxon>Sinorhizobium/Ensifer group</taxon>
        <taxon>Sinorhizobium</taxon>
    </lineage>
</organism>
<sequence>MLILFEPGVCQVDVATGRLKGATNRYVKTFRDLAGLYRDESAYQALIATRGDDVAYEVTDYKPSANGGDIIIGVTRMEPGKIGDEYFMTRGHIHARPNRPEMYYGEAGVGVMLLESPHGEIRTIEMRARTMCYVPPFWIHRSVNVGLEPLVMTFSYPADAGQDYDVIAKAGGMRTVLSMTGTVDGPQSITPVIQGDTHRL</sequence>
<dbReference type="EC" id="5.3.1.9"/>
<dbReference type="EMBL" id="AL591985">
    <property type="protein sequence ID" value="CAC49550.1"/>
    <property type="molecule type" value="Genomic_DNA"/>
</dbReference>
<dbReference type="PIR" id="F95985">
    <property type="entry name" value="F95985"/>
</dbReference>
<dbReference type="RefSeq" id="NP_437690.1">
    <property type="nucleotide sequence ID" value="NC_003078.1"/>
</dbReference>
<dbReference type="SMR" id="Q92UI1"/>
<dbReference type="EnsemblBacteria" id="CAC49550">
    <property type="protein sequence ID" value="CAC49550"/>
    <property type="gene ID" value="SM_b20857"/>
</dbReference>
<dbReference type="KEGG" id="sme:SM_b20857"/>
<dbReference type="PATRIC" id="fig|266834.11.peg.6079"/>
<dbReference type="eggNOG" id="COG2140">
    <property type="taxonomic scope" value="Bacteria"/>
</dbReference>
<dbReference type="HOGENOM" id="CLU_105797_0_0_5"/>
<dbReference type="OrthoDB" id="5592106at2"/>
<dbReference type="UniPathway" id="UPA00109">
    <property type="reaction ID" value="UER00181"/>
</dbReference>
<dbReference type="Proteomes" id="UP000001976">
    <property type="component" value="Plasmid pSymB"/>
</dbReference>
<dbReference type="GO" id="GO:0005737">
    <property type="term" value="C:cytoplasm"/>
    <property type="evidence" value="ECO:0007669"/>
    <property type="project" value="UniProtKB-SubCell"/>
</dbReference>
<dbReference type="GO" id="GO:0004347">
    <property type="term" value="F:glucose-6-phosphate isomerase activity"/>
    <property type="evidence" value="ECO:0007669"/>
    <property type="project" value="UniProtKB-UniRule"/>
</dbReference>
<dbReference type="GO" id="GO:0005506">
    <property type="term" value="F:iron ion binding"/>
    <property type="evidence" value="ECO:0007669"/>
    <property type="project" value="InterPro"/>
</dbReference>
<dbReference type="GO" id="GO:0006094">
    <property type="term" value="P:gluconeogenesis"/>
    <property type="evidence" value="ECO:0007669"/>
    <property type="project" value="UniProtKB-UniRule"/>
</dbReference>
<dbReference type="GO" id="GO:0006096">
    <property type="term" value="P:glycolytic process"/>
    <property type="evidence" value="ECO:0007669"/>
    <property type="project" value="UniProtKB-UniRule"/>
</dbReference>
<dbReference type="CDD" id="cd02218">
    <property type="entry name" value="cupin_PGI"/>
    <property type="match status" value="1"/>
</dbReference>
<dbReference type="Gene3D" id="2.60.120.10">
    <property type="entry name" value="Jelly Rolls"/>
    <property type="match status" value="1"/>
</dbReference>
<dbReference type="HAMAP" id="MF_01410">
    <property type="entry name" value="G6P_isomerase_arch"/>
    <property type="match status" value="1"/>
</dbReference>
<dbReference type="InterPro" id="IPR016758">
    <property type="entry name" value="G6P_isomerase_archaea/bacteria"/>
</dbReference>
<dbReference type="InterPro" id="IPR010551">
    <property type="entry name" value="G6P_isomerase_prok"/>
</dbReference>
<dbReference type="InterPro" id="IPR014710">
    <property type="entry name" value="RmlC-like_jellyroll"/>
</dbReference>
<dbReference type="InterPro" id="IPR011051">
    <property type="entry name" value="RmlC_Cupin_sf"/>
</dbReference>
<dbReference type="Pfam" id="PF06560">
    <property type="entry name" value="GPI"/>
    <property type="match status" value="1"/>
</dbReference>
<dbReference type="PIRSF" id="PIRSF019325">
    <property type="entry name" value="Glucose-6-phosphate_isomerase"/>
    <property type="match status" value="1"/>
</dbReference>
<dbReference type="SUPFAM" id="SSF51182">
    <property type="entry name" value="RmlC-like cupins"/>
    <property type="match status" value="1"/>
</dbReference>